<proteinExistence type="inferred from homology"/>
<organism>
    <name type="scientific">Pectobacterium carotovorum subsp. carotovorum (strain PC1)</name>
    <dbReference type="NCBI Taxonomy" id="561230"/>
    <lineage>
        <taxon>Bacteria</taxon>
        <taxon>Pseudomonadati</taxon>
        <taxon>Pseudomonadota</taxon>
        <taxon>Gammaproteobacteria</taxon>
        <taxon>Enterobacterales</taxon>
        <taxon>Pectobacteriaceae</taxon>
        <taxon>Pectobacterium</taxon>
    </lineage>
</organism>
<feature type="chain" id="PRO_1000215227" description="Glutathione-regulated potassium-efflux system ancillary protein KefG">
    <location>
        <begin position="1"/>
        <end position="183"/>
    </location>
</feature>
<keyword id="KW-0997">Cell inner membrane</keyword>
<keyword id="KW-1003">Cell membrane</keyword>
<keyword id="KW-0472">Membrane</keyword>
<keyword id="KW-0520">NAD</keyword>
<keyword id="KW-0560">Oxidoreductase</keyword>
<protein>
    <recommendedName>
        <fullName evidence="1">Glutathione-regulated potassium-efflux system ancillary protein KefG</fullName>
    </recommendedName>
    <alternativeName>
        <fullName evidence="1">Putative quinone oxidoreductase KefG</fullName>
        <ecNumber evidence="1">1.6.5.2</ecNumber>
    </alternativeName>
</protein>
<gene>
    <name evidence="1" type="primary">kefG</name>
    <name type="ordered locus">PC1_3846</name>
</gene>
<dbReference type="EC" id="1.6.5.2" evidence="1"/>
<dbReference type="EMBL" id="CP001657">
    <property type="protein sequence ID" value="ACT14861.1"/>
    <property type="molecule type" value="Genomic_DNA"/>
</dbReference>
<dbReference type="RefSeq" id="WP_015841946.1">
    <property type="nucleotide sequence ID" value="NC_012917.1"/>
</dbReference>
<dbReference type="SMR" id="C6DG98"/>
<dbReference type="STRING" id="561230.PC1_3846"/>
<dbReference type="GeneID" id="67792257"/>
<dbReference type="KEGG" id="pct:PC1_3846"/>
<dbReference type="eggNOG" id="COG2249">
    <property type="taxonomic scope" value="Bacteria"/>
</dbReference>
<dbReference type="HOGENOM" id="CLU_058643_0_1_6"/>
<dbReference type="Proteomes" id="UP000002736">
    <property type="component" value="Chromosome"/>
</dbReference>
<dbReference type="GO" id="GO:0005886">
    <property type="term" value="C:plasma membrane"/>
    <property type="evidence" value="ECO:0007669"/>
    <property type="project" value="UniProtKB-SubCell"/>
</dbReference>
<dbReference type="GO" id="GO:0009055">
    <property type="term" value="F:electron transfer activity"/>
    <property type="evidence" value="ECO:0007669"/>
    <property type="project" value="TreeGrafter"/>
</dbReference>
<dbReference type="GO" id="GO:0010181">
    <property type="term" value="F:FMN binding"/>
    <property type="evidence" value="ECO:0007669"/>
    <property type="project" value="TreeGrafter"/>
</dbReference>
<dbReference type="GO" id="GO:0050136">
    <property type="term" value="F:NADH:ubiquinone reductase (non-electrogenic) activity"/>
    <property type="evidence" value="ECO:0007669"/>
    <property type="project" value="RHEA"/>
</dbReference>
<dbReference type="GO" id="GO:0008753">
    <property type="term" value="F:NADPH dehydrogenase (quinone) activity"/>
    <property type="evidence" value="ECO:0007669"/>
    <property type="project" value="RHEA"/>
</dbReference>
<dbReference type="GO" id="GO:1901381">
    <property type="term" value="P:positive regulation of potassium ion transmembrane transport"/>
    <property type="evidence" value="ECO:0007669"/>
    <property type="project" value="UniProtKB-UniRule"/>
</dbReference>
<dbReference type="GO" id="GO:0006813">
    <property type="term" value="P:potassium ion transport"/>
    <property type="evidence" value="ECO:0007669"/>
    <property type="project" value="InterPro"/>
</dbReference>
<dbReference type="FunFam" id="3.40.50.360:FF:000013">
    <property type="entry name" value="Glutathione-regulated potassium-efflux system ancillary protein KefG"/>
    <property type="match status" value="1"/>
</dbReference>
<dbReference type="Gene3D" id="3.40.50.360">
    <property type="match status" value="1"/>
</dbReference>
<dbReference type="HAMAP" id="MF_01415">
    <property type="entry name" value="K_H_efflux_KefG"/>
    <property type="match status" value="1"/>
</dbReference>
<dbReference type="InterPro" id="IPR003680">
    <property type="entry name" value="Flavodoxin_fold"/>
</dbReference>
<dbReference type="InterPro" id="IPR029039">
    <property type="entry name" value="Flavoprotein-like_sf"/>
</dbReference>
<dbReference type="InterPro" id="IPR023947">
    <property type="entry name" value="K_H_efflux_KefG"/>
</dbReference>
<dbReference type="InterPro" id="IPR046980">
    <property type="entry name" value="KefG/KefF"/>
</dbReference>
<dbReference type="NCBIfam" id="NF003430">
    <property type="entry name" value="PRK04930.1"/>
    <property type="match status" value="1"/>
</dbReference>
<dbReference type="PANTHER" id="PTHR47307">
    <property type="entry name" value="GLUTATHIONE-REGULATED POTASSIUM-EFFLUX SYSTEM ANCILLARY PROTEIN KEFG"/>
    <property type="match status" value="1"/>
</dbReference>
<dbReference type="PANTHER" id="PTHR47307:SF1">
    <property type="entry name" value="GLUTATHIONE-REGULATED POTASSIUM-EFFLUX SYSTEM ANCILLARY PROTEIN KEFG"/>
    <property type="match status" value="1"/>
</dbReference>
<dbReference type="Pfam" id="PF02525">
    <property type="entry name" value="Flavodoxin_2"/>
    <property type="match status" value="1"/>
</dbReference>
<dbReference type="SUPFAM" id="SSF52218">
    <property type="entry name" value="Flavoproteins"/>
    <property type="match status" value="1"/>
</dbReference>
<evidence type="ECO:0000255" key="1">
    <source>
        <dbReference type="HAMAP-Rule" id="MF_01415"/>
    </source>
</evidence>
<accession>C6DG98</accession>
<sequence length="183" mass="21276">MSQPPKILLLYAHPEPQDSVANRVLLQPAQQLANVTVHDLYAHYPDFFIDIHHEQQLLREHQVIVFQHPFYTYSCPALLKEWLDRVLSRGFANGIGGNALAGKYWRSVITTGEPEDAYHPDGNNRYPMEDLLRPFELTAAMCRMHWMHPMIVYWARRLQPDVLSSQARAYGEWLASPLPEEER</sequence>
<name>KEFG_PECCP</name>
<reference key="1">
    <citation type="submission" date="2009-07" db="EMBL/GenBank/DDBJ databases">
        <title>Complete sequence of Pectobacterium carotovorum subsp. carotovorum PC1.</title>
        <authorList>
            <consortium name="US DOE Joint Genome Institute"/>
            <person name="Lucas S."/>
            <person name="Copeland A."/>
            <person name="Lapidus A."/>
            <person name="Glavina del Rio T."/>
            <person name="Tice H."/>
            <person name="Bruce D."/>
            <person name="Goodwin L."/>
            <person name="Pitluck S."/>
            <person name="Munk A.C."/>
            <person name="Brettin T."/>
            <person name="Detter J.C."/>
            <person name="Han C."/>
            <person name="Tapia R."/>
            <person name="Larimer F."/>
            <person name="Land M."/>
            <person name="Hauser L."/>
            <person name="Kyrpides N."/>
            <person name="Mikhailova N."/>
            <person name="Balakrishnan V."/>
            <person name="Glasner J."/>
            <person name="Perna N.T."/>
        </authorList>
    </citation>
    <scope>NUCLEOTIDE SEQUENCE [LARGE SCALE GENOMIC DNA]</scope>
    <source>
        <strain>PC1</strain>
    </source>
</reference>
<comment type="function">
    <text evidence="1">Regulatory subunit of a potassium efflux system that confers protection against electrophiles. Required for full activity of KefB.</text>
</comment>
<comment type="catalytic activity">
    <reaction evidence="1">
        <text>a quinone + NADH + H(+) = a quinol + NAD(+)</text>
        <dbReference type="Rhea" id="RHEA:46160"/>
        <dbReference type="ChEBI" id="CHEBI:15378"/>
        <dbReference type="ChEBI" id="CHEBI:24646"/>
        <dbReference type="ChEBI" id="CHEBI:57540"/>
        <dbReference type="ChEBI" id="CHEBI:57945"/>
        <dbReference type="ChEBI" id="CHEBI:132124"/>
        <dbReference type="EC" id="1.6.5.2"/>
    </reaction>
</comment>
<comment type="catalytic activity">
    <reaction evidence="1">
        <text>a quinone + NADPH + H(+) = a quinol + NADP(+)</text>
        <dbReference type="Rhea" id="RHEA:46164"/>
        <dbReference type="ChEBI" id="CHEBI:15378"/>
        <dbReference type="ChEBI" id="CHEBI:24646"/>
        <dbReference type="ChEBI" id="CHEBI:57783"/>
        <dbReference type="ChEBI" id="CHEBI:58349"/>
        <dbReference type="ChEBI" id="CHEBI:132124"/>
        <dbReference type="EC" id="1.6.5.2"/>
    </reaction>
</comment>
<comment type="subunit">
    <text evidence="1">Interacts with KefB.</text>
</comment>
<comment type="subcellular location">
    <subcellularLocation>
        <location evidence="1">Cell inner membrane</location>
        <topology evidence="1">Peripheral membrane protein</topology>
        <orientation evidence="1">Cytoplasmic side</orientation>
    </subcellularLocation>
</comment>
<comment type="similarity">
    <text evidence="1">Belongs to the NAD(P)H dehydrogenase (quinone) family. KefG subfamily.</text>
</comment>